<evidence type="ECO:0000250" key="1"/>
<evidence type="ECO:0000255" key="2"/>
<evidence type="ECO:0000269" key="3">
    <source>
    </source>
</evidence>
<evidence type="ECO:0000305" key="4"/>
<protein>
    <recommendedName>
        <fullName>Maximins 11/H11</fullName>
    </recommendedName>
    <component>
        <recommendedName>
            <fullName>Maximin-11</fullName>
        </recommendedName>
    </component>
    <component>
        <recommendedName>
            <fullName>Maximin-H11</fullName>
        </recommendedName>
    </component>
</protein>
<comment type="function">
    <text evidence="1">Maximin-11 shows antimicrobial activity against bacteria and against the fungus C.albicans. It has little hemolytic activity (By similarity).</text>
</comment>
<comment type="function">
    <text evidence="1">Maximin-H11 shows antimicrobial activity against bacteria and against the fungus C.albicans. Shows strong hemolytic activity (By similarity).</text>
</comment>
<comment type="subcellular location">
    <subcellularLocation>
        <location>Secreted</location>
    </subcellularLocation>
</comment>
<comment type="tissue specificity">
    <text>Expressed by the skin glands.</text>
</comment>
<comment type="similarity">
    <text evidence="4">Belongs to the bombinin family.</text>
</comment>
<accession>Q58T51</accession>
<name>M1111_BOMMX</name>
<feature type="signal peptide" evidence="2">
    <location>
        <begin position="1"/>
        <end position="18"/>
    </location>
</feature>
<feature type="propeptide" id="PRO_0000003232" evidence="1">
    <location>
        <begin position="19"/>
        <end position="43"/>
    </location>
</feature>
<feature type="peptide" id="PRO_0000003233" description="Maximin-11">
    <location>
        <begin position="44"/>
        <end position="70"/>
    </location>
</feature>
<feature type="propeptide" id="PRO_0000003234" evidence="1">
    <location>
        <begin position="74"/>
        <end position="123"/>
    </location>
</feature>
<feature type="peptide" id="PRO_0000003235" description="Maximin-H11">
    <location>
        <begin position="124"/>
        <end position="143"/>
    </location>
</feature>
<feature type="modified residue" description="Asparagine amide" evidence="3">
    <location>
        <position position="70"/>
    </location>
</feature>
<feature type="modified residue" description="Isoleucine amide" evidence="3">
    <location>
        <position position="143"/>
    </location>
</feature>
<proteinExistence type="evidence at protein level"/>
<organism>
    <name type="scientific">Bombina maxima</name>
    <name type="common">Giant fire-bellied toad</name>
    <name type="synonym">Chinese red belly toad</name>
    <dbReference type="NCBI Taxonomy" id="161274"/>
    <lineage>
        <taxon>Eukaryota</taxon>
        <taxon>Metazoa</taxon>
        <taxon>Chordata</taxon>
        <taxon>Craniata</taxon>
        <taxon>Vertebrata</taxon>
        <taxon>Euteleostomi</taxon>
        <taxon>Amphibia</taxon>
        <taxon>Batrachia</taxon>
        <taxon>Anura</taxon>
        <taxon>Bombinatoridae</taxon>
        <taxon>Bombina</taxon>
    </lineage>
</organism>
<keyword id="KW-0027">Amidation</keyword>
<keyword id="KW-0878">Amphibian defense peptide</keyword>
<keyword id="KW-0044">Antibiotic</keyword>
<keyword id="KW-0929">Antimicrobial</keyword>
<keyword id="KW-0165">Cleavage on pair of basic residues</keyword>
<keyword id="KW-0204">Cytolysis</keyword>
<keyword id="KW-0903">Direct protein sequencing</keyword>
<keyword id="KW-0295">Fungicide</keyword>
<keyword id="KW-0354">Hemolysis</keyword>
<keyword id="KW-0964">Secreted</keyword>
<keyword id="KW-0732">Signal</keyword>
<dbReference type="EMBL" id="AY849009">
    <property type="protein sequence ID" value="AAX50230.1"/>
    <property type="molecule type" value="mRNA"/>
</dbReference>
<dbReference type="SMR" id="Q58T51"/>
<dbReference type="GO" id="GO:0005576">
    <property type="term" value="C:extracellular region"/>
    <property type="evidence" value="ECO:0007669"/>
    <property type="project" value="UniProtKB-SubCell"/>
</dbReference>
<dbReference type="GO" id="GO:0042742">
    <property type="term" value="P:defense response to bacterium"/>
    <property type="evidence" value="ECO:0007669"/>
    <property type="project" value="UniProtKB-KW"/>
</dbReference>
<dbReference type="GO" id="GO:0050832">
    <property type="term" value="P:defense response to fungus"/>
    <property type="evidence" value="ECO:0007669"/>
    <property type="project" value="UniProtKB-KW"/>
</dbReference>
<dbReference type="GO" id="GO:0031640">
    <property type="term" value="P:killing of cells of another organism"/>
    <property type="evidence" value="ECO:0007669"/>
    <property type="project" value="UniProtKB-KW"/>
</dbReference>
<dbReference type="InterPro" id="IPR007962">
    <property type="entry name" value="Bombinin"/>
</dbReference>
<dbReference type="Pfam" id="PF05298">
    <property type="entry name" value="Bombinin"/>
    <property type="match status" value="1"/>
</dbReference>
<reference key="1">
    <citation type="journal article" date="2005" name="Eur. J. Immunol.">
        <title>Variety of antimicrobial peptides in the Bombina maxima toad and evidence of their rapid diversification.</title>
        <authorList>
            <person name="Lee W.-H."/>
            <person name="Li Y."/>
            <person name="Lai R."/>
            <person name="Li S."/>
            <person name="Zhang Y."/>
            <person name="Wang W."/>
        </authorList>
    </citation>
    <scope>NUCLEOTIDE SEQUENCE [MRNA]</scope>
    <scope>PROTEIN SEQUENCE OF 44-70 AND 124-143</scope>
    <scope>AMIDATION AT ASN-70 AND ILE-143</scope>
    <source>
        <tissue>Skin</tissue>
    </source>
</reference>
<sequence>MNFKYIVAVSFLIASAYARSEENDEQSLSQRDVLEEESLREIRGIGTKIIGGLKTAVKGALKELASTYVNGKRTAEDHEVMKRLEAVMRDLDSLDYPEEASERETRGFNQEEIANLFTKKEKRILGPVLGLVGSALGGLIKKIG</sequence>